<comment type="function">
    <text>Actins are highly conserved proteins that are involved in various types of cell motility and are ubiquitously expressed in all eukaryotic cells.</text>
</comment>
<comment type="catalytic activity">
    <reaction evidence="1">
        <text>ATP + H2O = ADP + phosphate + H(+)</text>
        <dbReference type="Rhea" id="RHEA:13065"/>
        <dbReference type="ChEBI" id="CHEBI:15377"/>
        <dbReference type="ChEBI" id="CHEBI:15378"/>
        <dbReference type="ChEBI" id="CHEBI:30616"/>
        <dbReference type="ChEBI" id="CHEBI:43474"/>
        <dbReference type="ChEBI" id="CHEBI:456216"/>
    </reaction>
</comment>
<comment type="subcellular location">
    <subcellularLocation>
        <location>Cytoplasm</location>
        <location>Cytoskeleton</location>
    </subcellularLocation>
</comment>
<comment type="similarity">
    <text evidence="2">Belongs to the actin family.</text>
</comment>
<organism>
    <name type="scientific">Pisum sativum</name>
    <name type="common">Garden pea</name>
    <name type="synonym">Lathyrus oleraceus</name>
    <dbReference type="NCBI Taxonomy" id="3888"/>
    <lineage>
        <taxon>Eukaryota</taxon>
        <taxon>Viridiplantae</taxon>
        <taxon>Streptophyta</taxon>
        <taxon>Embryophyta</taxon>
        <taxon>Tracheophyta</taxon>
        <taxon>Spermatophyta</taxon>
        <taxon>Magnoliopsida</taxon>
        <taxon>eudicotyledons</taxon>
        <taxon>Gunneridae</taxon>
        <taxon>Pentapetalae</taxon>
        <taxon>rosids</taxon>
        <taxon>fabids</taxon>
        <taxon>Fabales</taxon>
        <taxon>Fabaceae</taxon>
        <taxon>Papilionoideae</taxon>
        <taxon>50 kb inversion clade</taxon>
        <taxon>NPAAA clade</taxon>
        <taxon>Hologalegina</taxon>
        <taxon>IRL clade</taxon>
        <taxon>Fabeae</taxon>
        <taxon>Pisum</taxon>
    </lineage>
</organism>
<reference key="1">
    <citation type="submission" date="1992-08" db="EMBL/GenBank/DDBJ databases">
        <authorList>
            <person name="Cao X.F."/>
            <person name="Wang R.C."/>
            <person name="Yan L.F."/>
            <person name="Lu Z."/>
            <person name="Pan N."/>
            <person name="Chen Z.L."/>
        </authorList>
    </citation>
    <scope>NUCLEOTIDE SEQUENCE [MRNA]</scope>
    <source>
        <tissue>Tendril</tissue>
    </source>
</reference>
<evidence type="ECO:0000250" key="1">
    <source>
        <dbReference type="UniProtKB" id="P68137"/>
    </source>
</evidence>
<evidence type="ECO:0000305" key="2"/>
<name>ACT1_PEA</name>
<dbReference type="EC" id="3.6.4.-" evidence="1"/>
<dbReference type="EMBL" id="X67666">
    <property type="protein sequence ID" value="CAA47899.1"/>
    <property type="molecule type" value="mRNA"/>
</dbReference>
<dbReference type="PIR" id="S25488">
    <property type="entry name" value="S25488"/>
</dbReference>
<dbReference type="SMR" id="P30164"/>
<dbReference type="GO" id="GO:0005737">
    <property type="term" value="C:cytoplasm"/>
    <property type="evidence" value="ECO:0007669"/>
    <property type="project" value="UniProtKB-KW"/>
</dbReference>
<dbReference type="GO" id="GO:0005856">
    <property type="term" value="C:cytoskeleton"/>
    <property type="evidence" value="ECO:0007669"/>
    <property type="project" value="UniProtKB-SubCell"/>
</dbReference>
<dbReference type="GO" id="GO:0005524">
    <property type="term" value="F:ATP binding"/>
    <property type="evidence" value="ECO:0007669"/>
    <property type="project" value="UniProtKB-KW"/>
</dbReference>
<dbReference type="GO" id="GO:0016787">
    <property type="term" value="F:hydrolase activity"/>
    <property type="evidence" value="ECO:0007669"/>
    <property type="project" value="UniProtKB-KW"/>
</dbReference>
<dbReference type="CDD" id="cd10224">
    <property type="entry name" value="ASKHA_NBD_actin"/>
    <property type="match status" value="1"/>
</dbReference>
<dbReference type="FunFam" id="3.30.420.40:FF:000291">
    <property type="entry name" value="Actin, alpha skeletal muscle"/>
    <property type="match status" value="1"/>
</dbReference>
<dbReference type="FunFam" id="3.90.640.10:FF:000001">
    <property type="entry name" value="Actin, muscle"/>
    <property type="match status" value="1"/>
</dbReference>
<dbReference type="FunFam" id="3.30.420.40:FF:000404">
    <property type="entry name" value="Major actin"/>
    <property type="match status" value="1"/>
</dbReference>
<dbReference type="FunFam" id="3.30.420.40:FF:000058">
    <property type="entry name" value="Putative actin-related protein 5"/>
    <property type="match status" value="1"/>
</dbReference>
<dbReference type="Gene3D" id="3.30.420.40">
    <property type="match status" value="2"/>
</dbReference>
<dbReference type="Gene3D" id="3.90.640.10">
    <property type="entry name" value="Actin, Chain A, domain 4"/>
    <property type="match status" value="1"/>
</dbReference>
<dbReference type="InterPro" id="IPR004000">
    <property type="entry name" value="Actin"/>
</dbReference>
<dbReference type="InterPro" id="IPR020902">
    <property type="entry name" value="Actin/actin-like_CS"/>
</dbReference>
<dbReference type="InterPro" id="IPR004001">
    <property type="entry name" value="Actin_CS"/>
</dbReference>
<dbReference type="InterPro" id="IPR043129">
    <property type="entry name" value="ATPase_NBD"/>
</dbReference>
<dbReference type="PANTHER" id="PTHR11937">
    <property type="entry name" value="ACTIN"/>
    <property type="match status" value="1"/>
</dbReference>
<dbReference type="Pfam" id="PF00022">
    <property type="entry name" value="Actin"/>
    <property type="match status" value="1"/>
</dbReference>
<dbReference type="PRINTS" id="PR00190">
    <property type="entry name" value="ACTIN"/>
</dbReference>
<dbReference type="SMART" id="SM00268">
    <property type="entry name" value="ACTIN"/>
    <property type="match status" value="1"/>
</dbReference>
<dbReference type="SUPFAM" id="SSF53067">
    <property type="entry name" value="Actin-like ATPase domain"/>
    <property type="match status" value="2"/>
</dbReference>
<dbReference type="PROSITE" id="PS00406">
    <property type="entry name" value="ACTINS_1"/>
    <property type="match status" value="1"/>
</dbReference>
<dbReference type="PROSITE" id="PS00432">
    <property type="entry name" value="ACTINS_2"/>
    <property type="match status" value="1"/>
</dbReference>
<dbReference type="PROSITE" id="PS01132">
    <property type="entry name" value="ACTINS_ACT_LIKE"/>
    <property type="match status" value="1"/>
</dbReference>
<protein>
    <recommendedName>
        <fullName>Actin-1</fullName>
        <ecNumber evidence="1">3.6.4.-</ecNumber>
    </recommendedName>
</protein>
<feature type="chain" id="PRO_0000088980" description="Actin-1">
    <location>
        <begin position="1"/>
        <end position="376"/>
    </location>
</feature>
<sequence length="376" mass="41726">MADAEDIQPLVCDNGTGMVKAGFAGDDARAVFPSIVGRPRHTGVMVGMGQKDAYVGDEAQSKRGILTLKYPIEHGIVSNWDDMEKIWHHTFYNELRVAPEEHPVLLTEAPLNPKANREKMTQIMFETFNVPAMYVAIQAVLSLYASGRTTGIVLDSGDGVSHTVPIYEGYALPHAILRLDLAGRDLTESLMKILTERGYMFTTSAEREIVRDIKEKLAYVALDYEQELETAKSSSSIEKNYELPDGQVITIGAERFRCPEVLFQPSMIGMEAAGIHETTYNSIMKCDVDIRKDLYGNIVLSGGTTMFPGIADRMSKEITALAPSSMKIKVVAPPERKYSVWIGGSILASLSTFQQMWISKAEYDERGPSIVHRKCF</sequence>
<proteinExistence type="evidence at transcript level"/>
<keyword id="KW-0067">ATP-binding</keyword>
<keyword id="KW-0963">Cytoplasm</keyword>
<keyword id="KW-0206">Cytoskeleton</keyword>
<keyword id="KW-0378">Hydrolase</keyword>
<keyword id="KW-0547">Nucleotide-binding</keyword>
<accession>P30164</accession>